<proteinExistence type="inferred from homology"/>
<keyword id="KW-0963">Cytoplasm</keyword>
<keyword id="KW-0539">Nucleus</keyword>
<keyword id="KW-1185">Reference proteome</keyword>
<keyword id="KW-0694">RNA-binding</keyword>
<keyword id="KW-0813">Transport</keyword>
<keyword id="KW-0820">tRNA-binding</keyword>
<accession>Q54RI9</accession>
<protein>
    <recommendedName>
        <fullName>Exportin-T</fullName>
    </recommendedName>
    <alternativeName>
        <fullName>Exportin(tRNA)</fullName>
    </alternativeName>
    <alternativeName>
        <fullName>tRNA exportin</fullName>
    </alternativeName>
</protein>
<sequence length="1088" mass="125277">MDEFEKAIIYCFDPNVSEDIKQKALAYTESIKVAPEAWLFCLERLGKTQIVLVKFFCLQVFQEIILHRYETLSKTDRLNLRTGLMNWFRLYLVNNQEESAIKNKYAQVMVLLFKQEYLENWLTFFDDFLSMLSPGNSSIDIFLRICKSIDEEVVSFDVHRSPAELAQNTFIKDTMRENAITKIVASWYEILVHHQSPPLINMTLQNIKTYVGWIDISLIVNDKFIPLFCKYLGVRVVRDEVCDCFKEIINKGMDPFAKLTLIQQLEIKNIINFAQLDDQEFNIRVGALINLTGMEILRSLESIQTLQQEGFDKKFQSGEILLEEMLQLLFRFFNNESNDVSYSVYGLASLYVQKLKNIKVLNEKQIQHITLLVQIVRNKMRYKTSRIEEDDDESDIKFADFRKDLSNLFRNIFRICPEMVGSFIATNIQRIVENKNNNNKNKNTTNSKNGTINNNINKTNNNNNNNTNNINNNTNNINNNTTNNNNNNTNKNNVKNANNIKNNNNEDEEDDDDMSFSDIEVSIYLLFQMGEGISATSEETLKSFEKFFGSMVVVLSQSSISITEHQVVSLIYFETIVRYAKYIPMDEQQYLSSVLKSFLDERGIHNKDALVRSKAGYLLNKLAKYLKVQMFPYINDIIDALKNHLIISYEIQKEVPFEEQLNFYESLGFLIGGANLPIEKEALYIEKILNNPIIKMEEIIAKQLYKGDTKENQFYYTVQLTQLINVIGTFSKGFSSFNATNGQLKPDAYCTYKVYFKRSLESIIQLPSLIPSNEDIKSRTFFYMHRMVDVLGKDLKPLLVKILPILLDHATTIDILLEFLVFYNQLISKYKEELFDVINPTLCPIVDRIYKSLNTTIPPVEHSDAERALNDLKKSYFQLIQALFTHNLASTLTSTLNLPLLFQQVFNTVIGGCQASGSHSESIQKVCFVILKKMIDDYSPGGPHAVNGFQSFIYDQVVPLCFQVPLSDQFNMSDFTSTQILLEIGKSLRAIAQKYGDEFLTYMNTILLPKLNVSQEVINQFIKLLQPSSPIKDFQELLKLFIRQKKGLPIKTSNSNINLNNNNNINNNNNNINNNGHTNGNGVNKNGH</sequence>
<dbReference type="EMBL" id="AAFI02000050">
    <property type="protein sequence ID" value="EAL65889.1"/>
    <property type="molecule type" value="Genomic_DNA"/>
</dbReference>
<dbReference type="RefSeq" id="XP_639247.1">
    <property type="nucleotide sequence ID" value="XM_634155.1"/>
</dbReference>
<dbReference type="SMR" id="Q54RI9"/>
<dbReference type="FunCoup" id="Q54RI9">
    <property type="interactions" value="1034"/>
</dbReference>
<dbReference type="STRING" id="44689.Q54RI9"/>
<dbReference type="PaxDb" id="44689-DDB0237585"/>
<dbReference type="EnsemblProtists" id="EAL65889">
    <property type="protein sequence ID" value="EAL65889"/>
    <property type="gene ID" value="DDB_G0283119"/>
</dbReference>
<dbReference type="GeneID" id="8623933"/>
<dbReference type="KEGG" id="ddi:DDB_G0283119"/>
<dbReference type="dictyBase" id="DDB_G0283119">
    <property type="gene designation" value="xpot"/>
</dbReference>
<dbReference type="VEuPathDB" id="AmoebaDB:DDB_G0283119"/>
<dbReference type="eggNOG" id="KOG2021">
    <property type="taxonomic scope" value="Eukaryota"/>
</dbReference>
<dbReference type="HOGENOM" id="CLU_004414_0_1_1"/>
<dbReference type="InParanoid" id="Q54RI9"/>
<dbReference type="OMA" id="HEMFLFG"/>
<dbReference type="PhylomeDB" id="Q54RI9"/>
<dbReference type="PRO" id="PR:Q54RI9"/>
<dbReference type="Proteomes" id="UP000002195">
    <property type="component" value="Chromosome 4"/>
</dbReference>
<dbReference type="GO" id="GO:0005737">
    <property type="term" value="C:cytoplasm"/>
    <property type="evidence" value="ECO:0000318"/>
    <property type="project" value="GO_Central"/>
</dbReference>
<dbReference type="GO" id="GO:0005829">
    <property type="term" value="C:cytosol"/>
    <property type="evidence" value="ECO:0000250"/>
    <property type="project" value="dictyBase"/>
</dbReference>
<dbReference type="GO" id="GO:0005635">
    <property type="term" value="C:nuclear envelope"/>
    <property type="evidence" value="ECO:0000250"/>
    <property type="project" value="dictyBase"/>
</dbReference>
<dbReference type="GO" id="GO:0016363">
    <property type="term" value="C:nuclear matrix"/>
    <property type="evidence" value="ECO:0000318"/>
    <property type="project" value="GO_Central"/>
</dbReference>
<dbReference type="GO" id="GO:0005643">
    <property type="term" value="C:nuclear pore"/>
    <property type="evidence" value="ECO:0000318"/>
    <property type="project" value="GO_Central"/>
</dbReference>
<dbReference type="GO" id="GO:0005634">
    <property type="term" value="C:nucleus"/>
    <property type="evidence" value="ECO:0000250"/>
    <property type="project" value="dictyBase"/>
</dbReference>
<dbReference type="GO" id="GO:0031267">
    <property type="term" value="F:small GTPase binding"/>
    <property type="evidence" value="ECO:0007669"/>
    <property type="project" value="InterPro"/>
</dbReference>
<dbReference type="GO" id="GO:0000049">
    <property type="term" value="F:tRNA binding"/>
    <property type="evidence" value="ECO:0000250"/>
    <property type="project" value="dictyBase"/>
</dbReference>
<dbReference type="GO" id="GO:0006409">
    <property type="term" value="P:tRNA export from nucleus"/>
    <property type="evidence" value="ECO:0000250"/>
    <property type="project" value="dictyBase"/>
</dbReference>
<dbReference type="GO" id="GO:0071528">
    <property type="term" value="P:tRNA re-export from nucleus"/>
    <property type="evidence" value="ECO:0000318"/>
    <property type="project" value="GO_Central"/>
</dbReference>
<dbReference type="Gene3D" id="1.25.10.10">
    <property type="entry name" value="Leucine-rich Repeat Variant"/>
    <property type="match status" value="2"/>
</dbReference>
<dbReference type="InterPro" id="IPR011989">
    <property type="entry name" value="ARM-like"/>
</dbReference>
<dbReference type="InterPro" id="IPR016024">
    <property type="entry name" value="ARM-type_fold"/>
</dbReference>
<dbReference type="InterPro" id="IPR013598">
    <property type="entry name" value="Exportin-1/Importin-b-like"/>
</dbReference>
<dbReference type="InterPro" id="IPR045546">
    <property type="entry name" value="Exportin-T_C"/>
</dbReference>
<dbReference type="InterPro" id="IPR040017">
    <property type="entry name" value="XPOT"/>
</dbReference>
<dbReference type="PANTHER" id="PTHR15952:SF11">
    <property type="entry name" value="EXPORTIN-T"/>
    <property type="match status" value="1"/>
</dbReference>
<dbReference type="PANTHER" id="PTHR15952">
    <property type="entry name" value="EXPORTIN-T/LOS1"/>
    <property type="match status" value="1"/>
</dbReference>
<dbReference type="Pfam" id="PF19282">
    <property type="entry name" value="Exportin-T"/>
    <property type="match status" value="2"/>
</dbReference>
<dbReference type="Pfam" id="PF08389">
    <property type="entry name" value="Xpo1"/>
    <property type="match status" value="1"/>
</dbReference>
<dbReference type="SUPFAM" id="SSF48371">
    <property type="entry name" value="ARM repeat"/>
    <property type="match status" value="1"/>
</dbReference>
<organism>
    <name type="scientific">Dictyostelium discoideum</name>
    <name type="common">Social amoeba</name>
    <dbReference type="NCBI Taxonomy" id="44689"/>
    <lineage>
        <taxon>Eukaryota</taxon>
        <taxon>Amoebozoa</taxon>
        <taxon>Evosea</taxon>
        <taxon>Eumycetozoa</taxon>
        <taxon>Dictyostelia</taxon>
        <taxon>Dictyosteliales</taxon>
        <taxon>Dictyosteliaceae</taxon>
        <taxon>Dictyostelium</taxon>
    </lineage>
</organism>
<name>XPOT_DICDI</name>
<gene>
    <name type="primary">xpot</name>
    <name type="ORF">DDB_G0283119</name>
</gene>
<reference key="1">
    <citation type="journal article" date="2005" name="Nature">
        <title>The genome of the social amoeba Dictyostelium discoideum.</title>
        <authorList>
            <person name="Eichinger L."/>
            <person name="Pachebat J.A."/>
            <person name="Gloeckner G."/>
            <person name="Rajandream M.A."/>
            <person name="Sucgang R."/>
            <person name="Berriman M."/>
            <person name="Song J."/>
            <person name="Olsen R."/>
            <person name="Szafranski K."/>
            <person name="Xu Q."/>
            <person name="Tunggal B."/>
            <person name="Kummerfeld S."/>
            <person name="Madera M."/>
            <person name="Konfortov B.A."/>
            <person name="Rivero F."/>
            <person name="Bankier A.T."/>
            <person name="Lehmann R."/>
            <person name="Hamlin N."/>
            <person name="Davies R."/>
            <person name="Gaudet P."/>
            <person name="Fey P."/>
            <person name="Pilcher K."/>
            <person name="Chen G."/>
            <person name="Saunders D."/>
            <person name="Sodergren E.J."/>
            <person name="Davis P."/>
            <person name="Kerhornou A."/>
            <person name="Nie X."/>
            <person name="Hall N."/>
            <person name="Anjard C."/>
            <person name="Hemphill L."/>
            <person name="Bason N."/>
            <person name="Farbrother P."/>
            <person name="Desany B."/>
            <person name="Just E."/>
            <person name="Morio T."/>
            <person name="Rost R."/>
            <person name="Churcher C.M."/>
            <person name="Cooper J."/>
            <person name="Haydock S."/>
            <person name="van Driessche N."/>
            <person name="Cronin A."/>
            <person name="Goodhead I."/>
            <person name="Muzny D.M."/>
            <person name="Mourier T."/>
            <person name="Pain A."/>
            <person name="Lu M."/>
            <person name="Harper D."/>
            <person name="Lindsay R."/>
            <person name="Hauser H."/>
            <person name="James K.D."/>
            <person name="Quiles M."/>
            <person name="Madan Babu M."/>
            <person name="Saito T."/>
            <person name="Buchrieser C."/>
            <person name="Wardroper A."/>
            <person name="Felder M."/>
            <person name="Thangavelu M."/>
            <person name="Johnson D."/>
            <person name="Knights A."/>
            <person name="Loulseged H."/>
            <person name="Mungall K.L."/>
            <person name="Oliver K."/>
            <person name="Price C."/>
            <person name="Quail M.A."/>
            <person name="Urushihara H."/>
            <person name="Hernandez J."/>
            <person name="Rabbinowitsch E."/>
            <person name="Steffen D."/>
            <person name="Sanders M."/>
            <person name="Ma J."/>
            <person name="Kohara Y."/>
            <person name="Sharp S."/>
            <person name="Simmonds M.N."/>
            <person name="Spiegler S."/>
            <person name="Tivey A."/>
            <person name="Sugano S."/>
            <person name="White B."/>
            <person name="Walker D."/>
            <person name="Woodward J.R."/>
            <person name="Winckler T."/>
            <person name="Tanaka Y."/>
            <person name="Shaulsky G."/>
            <person name="Schleicher M."/>
            <person name="Weinstock G.M."/>
            <person name="Rosenthal A."/>
            <person name="Cox E.C."/>
            <person name="Chisholm R.L."/>
            <person name="Gibbs R.A."/>
            <person name="Loomis W.F."/>
            <person name="Platzer M."/>
            <person name="Kay R.R."/>
            <person name="Williams J.G."/>
            <person name="Dear P.H."/>
            <person name="Noegel A.A."/>
            <person name="Barrell B.G."/>
            <person name="Kuspa A."/>
        </authorList>
    </citation>
    <scope>NUCLEOTIDE SEQUENCE [LARGE SCALE GENOMIC DNA]</scope>
    <source>
        <strain>AX4</strain>
    </source>
</reference>
<feature type="chain" id="PRO_0000328524" description="Exportin-T">
    <location>
        <begin position="1"/>
        <end position="1088"/>
    </location>
</feature>
<feature type="region of interest" description="Disordered" evidence="2">
    <location>
        <begin position="435"/>
        <end position="513"/>
    </location>
</feature>
<feature type="region of interest" description="Disordered" evidence="2">
    <location>
        <begin position="1059"/>
        <end position="1088"/>
    </location>
</feature>
<feature type="compositionally biased region" description="Low complexity" evidence="2">
    <location>
        <begin position="435"/>
        <end position="503"/>
    </location>
</feature>
<evidence type="ECO:0000250" key="1"/>
<evidence type="ECO:0000256" key="2">
    <source>
        <dbReference type="SAM" id="MobiDB-lite"/>
    </source>
</evidence>
<evidence type="ECO:0000305" key="3"/>
<comment type="function">
    <text evidence="1">Mediates the nuclear export of aminoacylated tRNAs.</text>
</comment>
<comment type="subcellular location">
    <subcellularLocation>
        <location evidence="1">Nucleus</location>
    </subcellularLocation>
    <subcellularLocation>
        <location evidence="1">Cytoplasm</location>
    </subcellularLocation>
    <text evidence="1">Shuttles between the nucleus and the cytoplasm.</text>
</comment>
<comment type="similarity">
    <text evidence="3">Belongs to the exportin family.</text>
</comment>